<feature type="chain" id="PRO_0000243499" description="Large ribosomal subunit protein bL12">
    <location>
        <begin position="1"/>
        <end position="121"/>
    </location>
</feature>
<organism>
    <name type="scientific">Streptococcus agalactiae serotype Ia (strain ATCC 27591 / A909 / CDC SS700)</name>
    <dbReference type="NCBI Taxonomy" id="205921"/>
    <lineage>
        <taxon>Bacteria</taxon>
        <taxon>Bacillati</taxon>
        <taxon>Bacillota</taxon>
        <taxon>Bacilli</taxon>
        <taxon>Lactobacillales</taxon>
        <taxon>Streptococcaceae</taxon>
        <taxon>Streptococcus</taxon>
    </lineage>
</organism>
<name>RL7_STRA1</name>
<gene>
    <name evidence="1" type="primary">rplL</name>
    <name type="ordered locus">SAK_1334</name>
</gene>
<sequence>MALNIENIIAEIKEATILELNDLVKAIEEEFGVTAAAPVAAAAASGEAAAAKDSFDVELTAAGDKKVGVIKVVREITGEGLKEAKAIVDNAPSVIKEGASEAEANEIKEKLEAAGASVTLK</sequence>
<dbReference type="EMBL" id="CP000114">
    <property type="protein sequence ID" value="ABA45103.1"/>
    <property type="molecule type" value="Genomic_DNA"/>
</dbReference>
<dbReference type="RefSeq" id="WP_001196976.1">
    <property type="nucleotide sequence ID" value="NC_007432.1"/>
</dbReference>
<dbReference type="SMR" id="Q3K0K9"/>
<dbReference type="KEGG" id="sak:SAK_1334"/>
<dbReference type="HOGENOM" id="CLU_086499_3_2_9"/>
<dbReference type="GO" id="GO:0022625">
    <property type="term" value="C:cytosolic large ribosomal subunit"/>
    <property type="evidence" value="ECO:0007669"/>
    <property type="project" value="TreeGrafter"/>
</dbReference>
<dbReference type="GO" id="GO:0003729">
    <property type="term" value="F:mRNA binding"/>
    <property type="evidence" value="ECO:0007669"/>
    <property type="project" value="TreeGrafter"/>
</dbReference>
<dbReference type="GO" id="GO:0003735">
    <property type="term" value="F:structural constituent of ribosome"/>
    <property type="evidence" value="ECO:0007669"/>
    <property type="project" value="InterPro"/>
</dbReference>
<dbReference type="GO" id="GO:0006412">
    <property type="term" value="P:translation"/>
    <property type="evidence" value="ECO:0007669"/>
    <property type="project" value="UniProtKB-UniRule"/>
</dbReference>
<dbReference type="CDD" id="cd00387">
    <property type="entry name" value="Ribosomal_L7_L12"/>
    <property type="match status" value="1"/>
</dbReference>
<dbReference type="FunFam" id="3.30.1390.10:FF:000001">
    <property type="entry name" value="50S ribosomal protein L7/L12"/>
    <property type="match status" value="1"/>
</dbReference>
<dbReference type="Gene3D" id="3.30.1390.10">
    <property type="match status" value="1"/>
</dbReference>
<dbReference type="Gene3D" id="1.20.5.710">
    <property type="entry name" value="Single helix bin"/>
    <property type="match status" value="1"/>
</dbReference>
<dbReference type="HAMAP" id="MF_00368">
    <property type="entry name" value="Ribosomal_bL12"/>
    <property type="match status" value="1"/>
</dbReference>
<dbReference type="InterPro" id="IPR000206">
    <property type="entry name" value="Ribosomal_bL12"/>
</dbReference>
<dbReference type="InterPro" id="IPR013823">
    <property type="entry name" value="Ribosomal_bL12_C"/>
</dbReference>
<dbReference type="InterPro" id="IPR014719">
    <property type="entry name" value="Ribosomal_bL12_C/ClpS-like"/>
</dbReference>
<dbReference type="InterPro" id="IPR008932">
    <property type="entry name" value="Ribosomal_bL12_oligo"/>
</dbReference>
<dbReference type="InterPro" id="IPR036235">
    <property type="entry name" value="Ribosomal_bL12_oligo_N_sf"/>
</dbReference>
<dbReference type="NCBIfam" id="TIGR00855">
    <property type="entry name" value="L12"/>
    <property type="match status" value="1"/>
</dbReference>
<dbReference type="PANTHER" id="PTHR45987">
    <property type="entry name" value="39S RIBOSOMAL PROTEIN L12"/>
    <property type="match status" value="1"/>
</dbReference>
<dbReference type="PANTHER" id="PTHR45987:SF4">
    <property type="entry name" value="LARGE RIBOSOMAL SUBUNIT PROTEIN BL12M"/>
    <property type="match status" value="1"/>
</dbReference>
<dbReference type="Pfam" id="PF00542">
    <property type="entry name" value="Ribosomal_L12"/>
    <property type="match status" value="1"/>
</dbReference>
<dbReference type="Pfam" id="PF16320">
    <property type="entry name" value="Ribosomal_L12_N"/>
    <property type="match status" value="1"/>
</dbReference>
<dbReference type="SUPFAM" id="SSF54736">
    <property type="entry name" value="ClpS-like"/>
    <property type="match status" value="1"/>
</dbReference>
<dbReference type="SUPFAM" id="SSF48300">
    <property type="entry name" value="Ribosomal protein L7/12, oligomerisation (N-terminal) domain"/>
    <property type="match status" value="1"/>
</dbReference>
<proteinExistence type="inferred from homology"/>
<protein>
    <recommendedName>
        <fullName evidence="1">Large ribosomal subunit protein bL12</fullName>
    </recommendedName>
    <alternativeName>
        <fullName evidence="2">50S ribosomal protein L7/L12</fullName>
    </alternativeName>
</protein>
<keyword id="KW-0687">Ribonucleoprotein</keyword>
<keyword id="KW-0689">Ribosomal protein</keyword>
<comment type="function">
    <text evidence="1">Forms part of the ribosomal stalk which helps the ribosome interact with GTP-bound translation factors. Is thus essential for accurate translation.</text>
</comment>
<comment type="subunit">
    <text evidence="1">Homodimer. Part of the ribosomal stalk of the 50S ribosomal subunit. Forms a multimeric L10(L12)X complex, where L10 forms an elongated spine to which 2 to 4 L12 dimers bind in a sequential fashion. Binds GTP-bound translation factors.</text>
</comment>
<comment type="similarity">
    <text evidence="1">Belongs to the bacterial ribosomal protein bL12 family.</text>
</comment>
<reference key="1">
    <citation type="journal article" date="2005" name="Proc. Natl. Acad. Sci. U.S.A.">
        <title>Genome analysis of multiple pathogenic isolates of Streptococcus agalactiae: implications for the microbial 'pan-genome'.</title>
        <authorList>
            <person name="Tettelin H."/>
            <person name="Masignani V."/>
            <person name="Cieslewicz M.J."/>
            <person name="Donati C."/>
            <person name="Medini D."/>
            <person name="Ward N.L."/>
            <person name="Angiuoli S.V."/>
            <person name="Crabtree J."/>
            <person name="Jones A.L."/>
            <person name="Durkin A.S."/>
            <person name="DeBoy R.T."/>
            <person name="Davidsen T.M."/>
            <person name="Mora M."/>
            <person name="Scarselli M."/>
            <person name="Margarit y Ros I."/>
            <person name="Peterson J.D."/>
            <person name="Hauser C.R."/>
            <person name="Sundaram J.P."/>
            <person name="Nelson W.C."/>
            <person name="Madupu R."/>
            <person name="Brinkac L.M."/>
            <person name="Dodson R.J."/>
            <person name="Rosovitz M.J."/>
            <person name="Sullivan S.A."/>
            <person name="Daugherty S.C."/>
            <person name="Haft D.H."/>
            <person name="Selengut J."/>
            <person name="Gwinn M.L."/>
            <person name="Zhou L."/>
            <person name="Zafar N."/>
            <person name="Khouri H."/>
            <person name="Radune D."/>
            <person name="Dimitrov G."/>
            <person name="Watkins K."/>
            <person name="O'Connor K.J."/>
            <person name="Smith S."/>
            <person name="Utterback T.R."/>
            <person name="White O."/>
            <person name="Rubens C.E."/>
            <person name="Grandi G."/>
            <person name="Madoff L.C."/>
            <person name="Kasper D.L."/>
            <person name="Telford J.L."/>
            <person name="Wessels M.R."/>
            <person name="Rappuoli R."/>
            <person name="Fraser C.M."/>
        </authorList>
    </citation>
    <scope>NUCLEOTIDE SEQUENCE [LARGE SCALE GENOMIC DNA]</scope>
    <source>
        <strain>ATCC 27591 / A909 / CDC SS700</strain>
    </source>
</reference>
<accession>Q3K0K9</accession>
<evidence type="ECO:0000255" key="1">
    <source>
        <dbReference type="HAMAP-Rule" id="MF_00368"/>
    </source>
</evidence>
<evidence type="ECO:0000305" key="2"/>